<organism>
    <name type="scientific">Nitratidesulfovibrio vulgaris (strain DP4)</name>
    <name type="common">Desulfovibrio vulgaris</name>
    <dbReference type="NCBI Taxonomy" id="391774"/>
    <lineage>
        <taxon>Bacteria</taxon>
        <taxon>Pseudomonadati</taxon>
        <taxon>Thermodesulfobacteriota</taxon>
        <taxon>Desulfovibrionia</taxon>
        <taxon>Desulfovibrionales</taxon>
        <taxon>Desulfovibrionaceae</taxon>
        <taxon>Nitratidesulfovibrio</taxon>
    </lineage>
</organism>
<name>RUVC_NITV4</name>
<proteinExistence type="inferred from homology"/>
<keyword id="KW-0963">Cytoplasm</keyword>
<keyword id="KW-0227">DNA damage</keyword>
<keyword id="KW-0233">DNA recombination</keyword>
<keyword id="KW-0234">DNA repair</keyword>
<keyword id="KW-0238">DNA-binding</keyword>
<keyword id="KW-0255">Endonuclease</keyword>
<keyword id="KW-0378">Hydrolase</keyword>
<keyword id="KW-0460">Magnesium</keyword>
<keyword id="KW-0479">Metal-binding</keyword>
<keyword id="KW-0540">Nuclease</keyword>
<protein>
    <recommendedName>
        <fullName evidence="1">Crossover junction endodeoxyribonuclease RuvC</fullName>
        <ecNumber evidence="1">3.1.21.10</ecNumber>
    </recommendedName>
    <alternativeName>
        <fullName evidence="1">Holliday junction nuclease RuvC</fullName>
    </alternativeName>
    <alternativeName>
        <fullName evidence="1">Holliday junction resolvase RuvC</fullName>
    </alternativeName>
</protein>
<accession>A1VC42</accession>
<dbReference type="EC" id="3.1.21.10" evidence="1"/>
<dbReference type="EMBL" id="CP000527">
    <property type="protein sequence ID" value="ABM28008.1"/>
    <property type="molecule type" value="Genomic_DNA"/>
</dbReference>
<dbReference type="RefSeq" id="WP_011791971.1">
    <property type="nucleotide sequence ID" value="NC_008751.1"/>
</dbReference>
<dbReference type="SMR" id="A1VC42"/>
<dbReference type="KEGG" id="dvl:Dvul_0987"/>
<dbReference type="HOGENOM" id="CLU_091257_2_1_7"/>
<dbReference type="Proteomes" id="UP000009173">
    <property type="component" value="Chromosome"/>
</dbReference>
<dbReference type="GO" id="GO:0005737">
    <property type="term" value="C:cytoplasm"/>
    <property type="evidence" value="ECO:0007669"/>
    <property type="project" value="UniProtKB-SubCell"/>
</dbReference>
<dbReference type="GO" id="GO:0048476">
    <property type="term" value="C:Holliday junction resolvase complex"/>
    <property type="evidence" value="ECO:0007669"/>
    <property type="project" value="UniProtKB-UniRule"/>
</dbReference>
<dbReference type="GO" id="GO:0008821">
    <property type="term" value="F:crossover junction DNA endonuclease activity"/>
    <property type="evidence" value="ECO:0007669"/>
    <property type="project" value="UniProtKB-UniRule"/>
</dbReference>
<dbReference type="GO" id="GO:0003677">
    <property type="term" value="F:DNA binding"/>
    <property type="evidence" value="ECO:0007669"/>
    <property type="project" value="UniProtKB-KW"/>
</dbReference>
<dbReference type="GO" id="GO:0000287">
    <property type="term" value="F:magnesium ion binding"/>
    <property type="evidence" value="ECO:0007669"/>
    <property type="project" value="UniProtKB-UniRule"/>
</dbReference>
<dbReference type="GO" id="GO:0006310">
    <property type="term" value="P:DNA recombination"/>
    <property type="evidence" value="ECO:0007669"/>
    <property type="project" value="UniProtKB-UniRule"/>
</dbReference>
<dbReference type="GO" id="GO:0006281">
    <property type="term" value="P:DNA repair"/>
    <property type="evidence" value="ECO:0007669"/>
    <property type="project" value="UniProtKB-UniRule"/>
</dbReference>
<dbReference type="CDD" id="cd16962">
    <property type="entry name" value="RuvC"/>
    <property type="match status" value="1"/>
</dbReference>
<dbReference type="FunFam" id="3.30.420.10:FF:000002">
    <property type="entry name" value="Crossover junction endodeoxyribonuclease RuvC"/>
    <property type="match status" value="1"/>
</dbReference>
<dbReference type="Gene3D" id="3.30.420.10">
    <property type="entry name" value="Ribonuclease H-like superfamily/Ribonuclease H"/>
    <property type="match status" value="1"/>
</dbReference>
<dbReference type="HAMAP" id="MF_00034">
    <property type="entry name" value="RuvC"/>
    <property type="match status" value="1"/>
</dbReference>
<dbReference type="InterPro" id="IPR012337">
    <property type="entry name" value="RNaseH-like_sf"/>
</dbReference>
<dbReference type="InterPro" id="IPR036397">
    <property type="entry name" value="RNaseH_sf"/>
</dbReference>
<dbReference type="InterPro" id="IPR002176">
    <property type="entry name" value="X-over_junc_endoDNase_RuvC"/>
</dbReference>
<dbReference type="NCBIfam" id="TIGR00228">
    <property type="entry name" value="ruvC"/>
    <property type="match status" value="1"/>
</dbReference>
<dbReference type="PANTHER" id="PTHR30194">
    <property type="entry name" value="CROSSOVER JUNCTION ENDODEOXYRIBONUCLEASE RUVC"/>
    <property type="match status" value="1"/>
</dbReference>
<dbReference type="PANTHER" id="PTHR30194:SF3">
    <property type="entry name" value="CROSSOVER JUNCTION ENDODEOXYRIBONUCLEASE RUVC"/>
    <property type="match status" value="1"/>
</dbReference>
<dbReference type="Pfam" id="PF02075">
    <property type="entry name" value="RuvC"/>
    <property type="match status" value="1"/>
</dbReference>
<dbReference type="PRINTS" id="PR00696">
    <property type="entry name" value="RSOLVASERUVC"/>
</dbReference>
<dbReference type="SUPFAM" id="SSF53098">
    <property type="entry name" value="Ribonuclease H-like"/>
    <property type="match status" value="1"/>
</dbReference>
<evidence type="ECO:0000255" key="1">
    <source>
        <dbReference type="HAMAP-Rule" id="MF_00034"/>
    </source>
</evidence>
<sequence length="166" mass="17258">MAASVTVIGIDPGSQCTGWGIVREASGVLTLVNCGAIRPKGADFAARLGDLYRQLADVVRAHTPDEAAVEDVHAAQNVATALKLGQARGVVVAACAAHGVPVIDYRPSVIKKALVGTGRAEKEQVGYMVGQVLGVRPDWKLDTGDALAAAICHLNQRRLTRLAGLA</sequence>
<comment type="function">
    <text evidence="1">The RuvA-RuvB-RuvC complex processes Holliday junction (HJ) DNA during genetic recombination and DNA repair. Endonuclease that resolves HJ intermediates. Cleaves cruciform DNA by making single-stranded nicks across the HJ at symmetrical positions within the homologous arms, yielding a 5'-phosphate and a 3'-hydroxyl group; requires a central core of homology in the junction. The consensus cleavage sequence is 5'-(A/T)TT(C/G)-3'. Cleavage occurs on the 3'-side of the TT dinucleotide at the point of strand exchange. HJ branch migration catalyzed by RuvA-RuvB allows RuvC to scan DNA until it finds its consensus sequence, where it cleaves and resolves the cruciform DNA.</text>
</comment>
<comment type="catalytic activity">
    <reaction evidence="1">
        <text>Endonucleolytic cleavage at a junction such as a reciprocal single-stranded crossover between two homologous DNA duplexes (Holliday junction).</text>
        <dbReference type="EC" id="3.1.21.10"/>
    </reaction>
</comment>
<comment type="cofactor">
    <cofactor evidence="1">
        <name>Mg(2+)</name>
        <dbReference type="ChEBI" id="CHEBI:18420"/>
    </cofactor>
    <text evidence="1">Binds 2 Mg(2+) ion per subunit.</text>
</comment>
<comment type="subunit">
    <text evidence="1">Homodimer which binds Holliday junction (HJ) DNA. The HJ becomes 2-fold symmetrical on binding to RuvC with unstacked arms; it has a different conformation from HJ DNA in complex with RuvA. In the full resolvosome a probable DNA-RuvA(4)-RuvB(12)-RuvC(2) complex forms which resolves the HJ.</text>
</comment>
<comment type="subcellular location">
    <subcellularLocation>
        <location evidence="1">Cytoplasm</location>
    </subcellularLocation>
</comment>
<comment type="similarity">
    <text evidence="1">Belongs to the RuvC family.</text>
</comment>
<reference key="1">
    <citation type="journal article" date="2009" name="Environ. Microbiol.">
        <title>Contribution of mobile genetic elements to Desulfovibrio vulgaris genome plasticity.</title>
        <authorList>
            <person name="Walker C.B."/>
            <person name="Stolyar S."/>
            <person name="Chivian D."/>
            <person name="Pinel N."/>
            <person name="Gabster J.A."/>
            <person name="Dehal P.S."/>
            <person name="He Z."/>
            <person name="Yang Z.K."/>
            <person name="Yen H.C."/>
            <person name="Zhou J."/>
            <person name="Wall J.D."/>
            <person name="Hazen T.C."/>
            <person name="Arkin A.P."/>
            <person name="Stahl D.A."/>
        </authorList>
    </citation>
    <scope>NUCLEOTIDE SEQUENCE [LARGE SCALE GENOMIC DNA]</scope>
    <source>
        <strain>DP4</strain>
    </source>
</reference>
<feature type="chain" id="PRO_1000002749" description="Crossover junction endodeoxyribonuclease RuvC">
    <location>
        <begin position="1"/>
        <end position="166"/>
    </location>
</feature>
<feature type="active site" evidence="1">
    <location>
        <position position="11"/>
    </location>
</feature>
<feature type="active site" evidence="1">
    <location>
        <position position="70"/>
    </location>
</feature>
<feature type="active site" evidence="1">
    <location>
        <position position="142"/>
    </location>
</feature>
<feature type="binding site" evidence="1">
    <location>
        <position position="11"/>
    </location>
    <ligand>
        <name>Mg(2+)</name>
        <dbReference type="ChEBI" id="CHEBI:18420"/>
        <label>1</label>
    </ligand>
</feature>
<feature type="binding site" evidence="1">
    <location>
        <position position="70"/>
    </location>
    <ligand>
        <name>Mg(2+)</name>
        <dbReference type="ChEBI" id="CHEBI:18420"/>
        <label>2</label>
    </ligand>
</feature>
<feature type="binding site" evidence="1">
    <location>
        <position position="142"/>
    </location>
    <ligand>
        <name>Mg(2+)</name>
        <dbReference type="ChEBI" id="CHEBI:18420"/>
        <label>1</label>
    </ligand>
</feature>
<gene>
    <name evidence="1" type="primary">ruvC</name>
    <name type="ordered locus">Dvul_0987</name>
</gene>